<name>BL1S4_LACTC</name>
<accession>C5DJH5</accession>
<reference key="1">
    <citation type="journal article" date="2009" name="Genome Res.">
        <title>Comparative genomics of protoploid Saccharomycetaceae.</title>
        <authorList>
            <consortium name="The Genolevures Consortium"/>
            <person name="Souciet J.-L."/>
            <person name="Dujon B."/>
            <person name="Gaillardin C."/>
            <person name="Johnston M."/>
            <person name="Baret P.V."/>
            <person name="Cliften P."/>
            <person name="Sherman D.J."/>
            <person name="Weissenbach J."/>
            <person name="Westhof E."/>
            <person name="Wincker P."/>
            <person name="Jubin C."/>
            <person name="Poulain J."/>
            <person name="Barbe V."/>
            <person name="Segurens B."/>
            <person name="Artiguenave F."/>
            <person name="Anthouard V."/>
            <person name="Vacherie B."/>
            <person name="Val M.-E."/>
            <person name="Fulton R.S."/>
            <person name="Minx P."/>
            <person name="Wilson R."/>
            <person name="Durrens P."/>
            <person name="Jean G."/>
            <person name="Marck C."/>
            <person name="Martin T."/>
            <person name="Nikolski M."/>
            <person name="Rolland T."/>
            <person name="Seret M.-L."/>
            <person name="Casaregola S."/>
            <person name="Despons L."/>
            <person name="Fairhead C."/>
            <person name="Fischer G."/>
            <person name="Lafontaine I."/>
            <person name="Leh V."/>
            <person name="Lemaire M."/>
            <person name="de Montigny J."/>
            <person name="Neuveglise C."/>
            <person name="Thierry A."/>
            <person name="Blanc-Lenfle I."/>
            <person name="Bleykasten C."/>
            <person name="Diffels J."/>
            <person name="Fritsch E."/>
            <person name="Frangeul L."/>
            <person name="Goeffon A."/>
            <person name="Jauniaux N."/>
            <person name="Kachouri-Lafond R."/>
            <person name="Payen C."/>
            <person name="Potier S."/>
            <person name="Pribylova L."/>
            <person name="Ozanne C."/>
            <person name="Richard G.-F."/>
            <person name="Sacerdot C."/>
            <person name="Straub M.-L."/>
            <person name="Talla E."/>
        </authorList>
    </citation>
    <scope>NUCLEOTIDE SEQUENCE [LARGE SCALE GENOMIC DNA]</scope>
    <source>
        <strain>ATCC 56472 / CBS 6340 / NRRL Y-8284</strain>
    </source>
</reference>
<comment type="function">
    <text evidence="1">Component of the biogenesis of lysosome-related organelles complex-1 (BLOC-1), a complex that is involved in endosomal cargo sorting.</text>
</comment>
<comment type="subunit">
    <text evidence="1">Component of the biogenesis of lysosome-related organelles complex-1 (BLOC-1).</text>
</comment>
<comment type="subcellular location">
    <subcellularLocation>
        <location evidence="1">Cytoplasm</location>
    </subcellularLocation>
    <text evidence="1">Punctate pattern.</text>
</comment>
<comment type="similarity">
    <text evidence="4">Belongs to the BLOC1S4 family.</text>
</comment>
<sequence length="131" mass="15183">MSAPDSNSGHAHDSAQNEGAAEGTRDPFGIDRLSVDYDYLLYRIQDHVTSIQLSTTEICRQQNQLVEQGIIGDAIDINIEEMRRILQKCEELETHFDMLDQIDSIVQTFRPRLDDIVREHRELTRNTERRI</sequence>
<dbReference type="EMBL" id="CU928170">
    <property type="protein sequence ID" value="CAR24464.1"/>
    <property type="molecule type" value="Genomic_DNA"/>
</dbReference>
<dbReference type="RefSeq" id="XP_002554901.1">
    <property type="nucleotide sequence ID" value="XM_002554855.1"/>
</dbReference>
<dbReference type="SMR" id="C5DJH5"/>
<dbReference type="FunCoup" id="C5DJH5">
    <property type="interactions" value="36"/>
</dbReference>
<dbReference type="STRING" id="559295.C5DJH5"/>
<dbReference type="GeneID" id="8293134"/>
<dbReference type="KEGG" id="lth:KLTH0F16478g"/>
<dbReference type="eggNOG" id="ENOG502S4DQ">
    <property type="taxonomic scope" value="Eukaryota"/>
</dbReference>
<dbReference type="HOGENOM" id="CLU_141728_1_0_1"/>
<dbReference type="InParanoid" id="C5DJH5"/>
<dbReference type="OMA" id="HFDMLDQ"/>
<dbReference type="OrthoDB" id="5424991at2759"/>
<dbReference type="Proteomes" id="UP000002036">
    <property type="component" value="Chromosome F"/>
</dbReference>
<dbReference type="GO" id="GO:0031083">
    <property type="term" value="C:BLOC-1 complex"/>
    <property type="evidence" value="ECO:0007669"/>
    <property type="project" value="InterPro"/>
</dbReference>
<dbReference type="GO" id="GO:0005737">
    <property type="term" value="C:cytoplasm"/>
    <property type="evidence" value="ECO:0007669"/>
    <property type="project" value="UniProtKB-SubCell"/>
</dbReference>
<dbReference type="GO" id="GO:0007032">
    <property type="term" value="P:endosome organization"/>
    <property type="evidence" value="ECO:0007669"/>
    <property type="project" value="TreeGrafter"/>
</dbReference>
<dbReference type="CDD" id="cd24144">
    <property type="entry name" value="BLOC1_CNL1"/>
    <property type="match status" value="1"/>
</dbReference>
<dbReference type="InterPro" id="IPR034455">
    <property type="entry name" value="CNL1"/>
</dbReference>
<dbReference type="PANTHER" id="PTHR39145">
    <property type="entry name" value="BIOGENESIS OF LYSOSOME-RELATED ORGANELLES COMPLEX 1 SUBUNIT CNL1"/>
    <property type="match status" value="1"/>
</dbReference>
<dbReference type="PANTHER" id="PTHR39145:SF1">
    <property type="entry name" value="BIOGENESIS OF LYSOSOME-RELATED ORGANELLES COMPLEX 1 SUBUNIT CNL1"/>
    <property type="match status" value="1"/>
</dbReference>
<gene>
    <name type="primary">CLN1</name>
    <name type="ordered locus">KLTH0F16478g</name>
</gene>
<organism>
    <name type="scientific">Lachancea thermotolerans (strain ATCC 56472 / CBS 6340 / NRRL Y-8284)</name>
    <name type="common">Yeast</name>
    <name type="synonym">Kluyveromyces thermotolerans</name>
    <dbReference type="NCBI Taxonomy" id="559295"/>
    <lineage>
        <taxon>Eukaryota</taxon>
        <taxon>Fungi</taxon>
        <taxon>Dikarya</taxon>
        <taxon>Ascomycota</taxon>
        <taxon>Saccharomycotina</taxon>
        <taxon>Saccharomycetes</taxon>
        <taxon>Saccharomycetales</taxon>
        <taxon>Saccharomycetaceae</taxon>
        <taxon>Lachancea</taxon>
    </lineage>
</organism>
<proteinExistence type="inferred from homology"/>
<protein>
    <recommendedName>
        <fullName>Biogenesis of lysosome-related organelles complex 1 subunit CNL1</fullName>
        <shortName>BLOC-1 subunit CNL1</shortName>
    </recommendedName>
    <alternativeName>
        <fullName>CNO-like protein 1</fullName>
    </alternativeName>
</protein>
<keyword id="KW-0175">Coiled coil</keyword>
<keyword id="KW-0963">Cytoplasm</keyword>
<keyword id="KW-1185">Reference proteome</keyword>
<keyword id="KW-0813">Transport</keyword>
<evidence type="ECO:0000250" key="1"/>
<evidence type="ECO:0000255" key="2"/>
<evidence type="ECO:0000256" key="3">
    <source>
        <dbReference type="SAM" id="MobiDB-lite"/>
    </source>
</evidence>
<evidence type="ECO:0000305" key="4"/>
<feature type="chain" id="PRO_0000410644" description="Biogenesis of lysosome-related organelles complex 1 subunit CNL1">
    <location>
        <begin position="1"/>
        <end position="131"/>
    </location>
</feature>
<feature type="region of interest" description="Disordered" evidence="3">
    <location>
        <begin position="1"/>
        <end position="29"/>
    </location>
</feature>
<feature type="coiled-coil region" evidence="2">
    <location>
        <begin position="73"/>
        <end position="101"/>
    </location>
</feature>